<feature type="chain" id="PRO_1000100826" description="Galactokinase">
    <location>
        <begin position="1"/>
        <end position="390"/>
    </location>
</feature>
<feature type="active site" description="Proton acceptor" evidence="1">
    <location>
        <position position="172"/>
    </location>
</feature>
<feature type="binding site" evidence="1">
    <location>
        <begin position="34"/>
        <end position="37"/>
    </location>
    <ligand>
        <name>substrate</name>
    </ligand>
</feature>
<feature type="binding site" evidence="1">
    <location>
        <position position="68"/>
    </location>
    <ligand>
        <name>ATP</name>
        <dbReference type="ChEBI" id="CHEBI:30616"/>
    </ligand>
</feature>
<feature type="binding site" evidence="1">
    <location>
        <begin position="122"/>
        <end position="128"/>
    </location>
    <ligand>
        <name>ATP</name>
        <dbReference type="ChEBI" id="CHEBI:30616"/>
    </ligand>
</feature>
<feature type="binding site" evidence="1">
    <location>
        <position position="128"/>
    </location>
    <ligand>
        <name>Mg(2+)</name>
        <dbReference type="ChEBI" id="CHEBI:18420"/>
    </ligand>
</feature>
<feature type="binding site" evidence="1">
    <location>
        <position position="160"/>
    </location>
    <ligand>
        <name>Mg(2+)</name>
        <dbReference type="ChEBI" id="CHEBI:18420"/>
    </ligand>
</feature>
<feature type="binding site" evidence="1">
    <location>
        <position position="221"/>
    </location>
    <ligand>
        <name>substrate</name>
    </ligand>
</feature>
<feature type="site" description="Transition state stabilizer" evidence="1">
    <location>
        <position position="28"/>
    </location>
</feature>
<sequence>MYELSTLYAAFEQYFGHPPTRIARAPGRVNLIGEHTDYNDGFVFPMALDRATYVAARPRNDQIVRVFSIKFRDEDQFDLQQIVRDERRQWVNYIRGVAKGLLARDLPLRGADLMIDSDVPAGSGLSSSAALEVAVGYTFQLLNNINLLGEELALVAQGAEHTFVGVKCGIMDQLIAALGEAGHALLIDCRDLSYRPVPIPAEARVVVCDSGVRHRLAGSEYNQRRAGCEEAVRLLKPALGKIQALRDVRSSDLAMYGHLLPPDLLPLARHVVSENERTLAAAEALAAGDLVKMGQLMVASHVSLRDDYRVSVRELDTLVDLALAAPGCFGSRMTGGGFGGSTVSLVAADHVDAFVAAMVDGYAIRTGRKLQPLVCTAGAGVSCVYASEEE</sequence>
<reference key="1">
    <citation type="journal article" date="2011" name="BMC Genomics">
        <title>Complete genome sequence of the filamentous anoxygenic phototrophic bacterium Chloroflexus aurantiacus.</title>
        <authorList>
            <person name="Tang K.H."/>
            <person name="Barry K."/>
            <person name="Chertkov O."/>
            <person name="Dalin E."/>
            <person name="Han C.S."/>
            <person name="Hauser L.J."/>
            <person name="Honchak B.M."/>
            <person name="Karbach L.E."/>
            <person name="Land M.L."/>
            <person name="Lapidus A."/>
            <person name="Larimer F.W."/>
            <person name="Mikhailova N."/>
            <person name="Pitluck S."/>
            <person name="Pierson B.K."/>
            <person name="Blankenship R.E."/>
        </authorList>
    </citation>
    <scope>NUCLEOTIDE SEQUENCE [LARGE SCALE GENOMIC DNA]</scope>
    <source>
        <strain>ATCC 29366 / DSM 635 / J-10-fl</strain>
    </source>
</reference>
<dbReference type="EC" id="2.7.1.6" evidence="1"/>
<dbReference type="EMBL" id="CP000909">
    <property type="protein sequence ID" value="ABY36890.1"/>
    <property type="molecule type" value="Genomic_DNA"/>
</dbReference>
<dbReference type="RefSeq" id="WP_012259543.1">
    <property type="nucleotide sequence ID" value="NC_010175.1"/>
</dbReference>
<dbReference type="RefSeq" id="YP_001637279.1">
    <property type="nucleotide sequence ID" value="NC_010175.1"/>
</dbReference>
<dbReference type="SMR" id="A9WB97"/>
<dbReference type="FunCoup" id="A9WB97">
    <property type="interactions" value="342"/>
</dbReference>
<dbReference type="STRING" id="324602.Caur_3712"/>
<dbReference type="EnsemblBacteria" id="ABY36890">
    <property type="protein sequence ID" value="ABY36890"/>
    <property type="gene ID" value="Caur_3712"/>
</dbReference>
<dbReference type="KEGG" id="cau:Caur_3712"/>
<dbReference type="PATRIC" id="fig|324602.8.peg.4163"/>
<dbReference type="eggNOG" id="COG0153">
    <property type="taxonomic scope" value="Bacteria"/>
</dbReference>
<dbReference type="HOGENOM" id="CLU_017814_2_1_0"/>
<dbReference type="InParanoid" id="A9WB97"/>
<dbReference type="UniPathway" id="UPA00214"/>
<dbReference type="Proteomes" id="UP000002008">
    <property type="component" value="Chromosome"/>
</dbReference>
<dbReference type="GO" id="GO:0005829">
    <property type="term" value="C:cytosol"/>
    <property type="evidence" value="ECO:0000318"/>
    <property type="project" value="GO_Central"/>
</dbReference>
<dbReference type="GO" id="GO:0005524">
    <property type="term" value="F:ATP binding"/>
    <property type="evidence" value="ECO:0007669"/>
    <property type="project" value="UniProtKB-UniRule"/>
</dbReference>
<dbReference type="GO" id="GO:0004335">
    <property type="term" value="F:galactokinase activity"/>
    <property type="evidence" value="ECO:0000318"/>
    <property type="project" value="GO_Central"/>
</dbReference>
<dbReference type="GO" id="GO:0000287">
    <property type="term" value="F:magnesium ion binding"/>
    <property type="evidence" value="ECO:0007669"/>
    <property type="project" value="UniProtKB-UniRule"/>
</dbReference>
<dbReference type="GO" id="GO:0006012">
    <property type="term" value="P:galactose metabolic process"/>
    <property type="evidence" value="ECO:0000318"/>
    <property type="project" value="GO_Central"/>
</dbReference>
<dbReference type="FunFam" id="3.30.230.10:FF:000017">
    <property type="entry name" value="Galactokinase"/>
    <property type="match status" value="1"/>
</dbReference>
<dbReference type="FunFam" id="3.30.70.890:FF:000001">
    <property type="entry name" value="Galactokinase"/>
    <property type="match status" value="1"/>
</dbReference>
<dbReference type="Gene3D" id="3.30.230.10">
    <property type="match status" value="1"/>
</dbReference>
<dbReference type="Gene3D" id="3.30.70.890">
    <property type="entry name" value="GHMP kinase, C-terminal domain"/>
    <property type="match status" value="1"/>
</dbReference>
<dbReference type="HAMAP" id="MF_00246">
    <property type="entry name" value="Galactokinase"/>
    <property type="match status" value="1"/>
</dbReference>
<dbReference type="InterPro" id="IPR000705">
    <property type="entry name" value="Galactokinase"/>
</dbReference>
<dbReference type="InterPro" id="IPR022963">
    <property type="entry name" value="Galactokinase_bac"/>
</dbReference>
<dbReference type="InterPro" id="IPR019741">
    <property type="entry name" value="Galactokinase_CS"/>
</dbReference>
<dbReference type="InterPro" id="IPR019539">
    <property type="entry name" value="GalKase_N"/>
</dbReference>
<dbReference type="InterPro" id="IPR013750">
    <property type="entry name" value="GHMP_kinase_C_dom"/>
</dbReference>
<dbReference type="InterPro" id="IPR036554">
    <property type="entry name" value="GHMP_kinase_C_sf"/>
</dbReference>
<dbReference type="InterPro" id="IPR006204">
    <property type="entry name" value="GHMP_kinase_N_dom"/>
</dbReference>
<dbReference type="InterPro" id="IPR006203">
    <property type="entry name" value="GHMP_knse_ATP-bd_CS"/>
</dbReference>
<dbReference type="InterPro" id="IPR006206">
    <property type="entry name" value="Mevalonate/galactokinase"/>
</dbReference>
<dbReference type="InterPro" id="IPR020568">
    <property type="entry name" value="Ribosomal_Su5_D2-typ_SF"/>
</dbReference>
<dbReference type="InterPro" id="IPR014721">
    <property type="entry name" value="Ribsml_uS5_D2-typ_fold_subgr"/>
</dbReference>
<dbReference type="NCBIfam" id="TIGR00131">
    <property type="entry name" value="gal_kin"/>
    <property type="match status" value="1"/>
</dbReference>
<dbReference type="PANTHER" id="PTHR10457:SF7">
    <property type="entry name" value="GALACTOKINASE-RELATED"/>
    <property type="match status" value="1"/>
</dbReference>
<dbReference type="PANTHER" id="PTHR10457">
    <property type="entry name" value="MEVALONATE KINASE/GALACTOKINASE"/>
    <property type="match status" value="1"/>
</dbReference>
<dbReference type="Pfam" id="PF10509">
    <property type="entry name" value="GalKase_gal_bdg"/>
    <property type="match status" value="1"/>
</dbReference>
<dbReference type="Pfam" id="PF08544">
    <property type="entry name" value="GHMP_kinases_C"/>
    <property type="match status" value="1"/>
</dbReference>
<dbReference type="Pfam" id="PF00288">
    <property type="entry name" value="GHMP_kinases_N"/>
    <property type="match status" value="1"/>
</dbReference>
<dbReference type="PIRSF" id="PIRSF000530">
    <property type="entry name" value="Galactokinase"/>
    <property type="match status" value="1"/>
</dbReference>
<dbReference type="PRINTS" id="PR00473">
    <property type="entry name" value="GALCTOKINASE"/>
</dbReference>
<dbReference type="PRINTS" id="PR00959">
    <property type="entry name" value="MEVGALKINASE"/>
</dbReference>
<dbReference type="SUPFAM" id="SSF55060">
    <property type="entry name" value="GHMP Kinase, C-terminal domain"/>
    <property type="match status" value="1"/>
</dbReference>
<dbReference type="SUPFAM" id="SSF54211">
    <property type="entry name" value="Ribosomal protein S5 domain 2-like"/>
    <property type="match status" value="1"/>
</dbReference>
<dbReference type="PROSITE" id="PS00106">
    <property type="entry name" value="GALACTOKINASE"/>
    <property type="match status" value="1"/>
</dbReference>
<dbReference type="PROSITE" id="PS00627">
    <property type="entry name" value="GHMP_KINASES_ATP"/>
    <property type="match status" value="1"/>
</dbReference>
<accession>A9WB97</accession>
<protein>
    <recommendedName>
        <fullName evidence="1">Galactokinase</fullName>
        <ecNumber evidence="1">2.7.1.6</ecNumber>
    </recommendedName>
    <alternativeName>
        <fullName evidence="1">Galactose kinase</fullName>
    </alternativeName>
</protein>
<name>GAL1_CHLAA</name>
<proteinExistence type="inferred from homology"/>
<evidence type="ECO:0000255" key="1">
    <source>
        <dbReference type="HAMAP-Rule" id="MF_00246"/>
    </source>
</evidence>
<comment type="function">
    <text evidence="1">Catalyzes the transfer of the gamma-phosphate of ATP to D-galactose to form alpha-D-galactose-1-phosphate (Gal-1-P).</text>
</comment>
<comment type="catalytic activity">
    <reaction evidence="1">
        <text>alpha-D-galactose + ATP = alpha-D-galactose 1-phosphate + ADP + H(+)</text>
        <dbReference type="Rhea" id="RHEA:13553"/>
        <dbReference type="ChEBI" id="CHEBI:15378"/>
        <dbReference type="ChEBI" id="CHEBI:28061"/>
        <dbReference type="ChEBI" id="CHEBI:30616"/>
        <dbReference type="ChEBI" id="CHEBI:58336"/>
        <dbReference type="ChEBI" id="CHEBI:456216"/>
        <dbReference type="EC" id="2.7.1.6"/>
    </reaction>
</comment>
<comment type="pathway">
    <text evidence="1">Carbohydrate metabolism; galactose metabolism.</text>
</comment>
<comment type="subcellular location">
    <subcellularLocation>
        <location evidence="1">Cytoplasm</location>
    </subcellularLocation>
</comment>
<comment type="similarity">
    <text evidence="1">Belongs to the GHMP kinase family. GalK subfamily.</text>
</comment>
<gene>
    <name evidence="1" type="primary">galK</name>
    <name type="ordered locus">Caur_3712</name>
</gene>
<organism>
    <name type="scientific">Chloroflexus aurantiacus (strain ATCC 29366 / DSM 635 / J-10-fl)</name>
    <dbReference type="NCBI Taxonomy" id="324602"/>
    <lineage>
        <taxon>Bacteria</taxon>
        <taxon>Bacillati</taxon>
        <taxon>Chloroflexota</taxon>
        <taxon>Chloroflexia</taxon>
        <taxon>Chloroflexales</taxon>
        <taxon>Chloroflexineae</taxon>
        <taxon>Chloroflexaceae</taxon>
        <taxon>Chloroflexus</taxon>
    </lineage>
</organism>
<keyword id="KW-0067">ATP-binding</keyword>
<keyword id="KW-0119">Carbohydrate metabolism</keyword>
<keyword id="KW-0963">Cytoplasm</keyword>
<keyword id="KW-0299">Galactose metabolism</keyword>
<keyword id="KW-0418">Kinase</keyword>
<keyword id="KW-0460">Magnesium</keyword>
<keyword id="KW-0479">Metal-binding</keyword>
<keyword id="KW-0547">Nucleotide-binding</keyword>
<keyword id="KW-1185">Reference proteome</keyword>
<keyword id="KW-0808">Transferase</keyword>